<gene>
    <name type="primary">TRM61</name>
    <name type="ordered locus">CAGL0L05566g</name>
</gene>
<accession>Q6FL77</accession>
<feature type="chain" id="PRO_0000256171" description="tRNA (adenine(58)-N(1))-methyltransferase catalytic subunit TRM61">
    <location>
        <begin position="1"/>
        <end position="374"/>
    </location>
</feature>
<feature type="binding site" evidence="2">
    <location>
        <begin position="120"/>
        <end position="122"/>
    </location>
    <ligand>
        <name>S-adenosyl-L-methionine</name>
        <dbReference type="ChEBI" id="CHEBI:59789"/>
    </ligand>
</feature>
<feature type="binding site" evidence="2 3">
    <location>
        <position position="138"/>
    </location>
    <ligand>
        <name>S-adenosyl-L-methionine</name>
        <dbReference type="ChEBI" id="CHEBI:59789"/>
    </ligand>
</feature>
<feature type="binding site" evidence="2">
    <location>
        <position position="143"/>
    </location>
    <ligand>
        <name>S-adenosyl-L-methionine</name>
        <dbReference type="ChEBI" id="CHEBI:59789"/>
    </ligand>
</feature>
<feature type="binding site" evidence="2">
    <location>
        <begin position="167"/>
        <end position="168"/>
    </location>
    <ligand>
        <name>S-adenosyl-L-methionine</name>
        <dbReference type="ChEBI" id="CHEBI:59789"/>
    </ligand>
</feature>
<feature type="binding site" evidence="2 3">
    <location>
        <position position="202"/>
    </location>
    <ligand>
        <name>S-adenosyl-L-methionine</name>
        <dbReference type="ChEBI" id="CHEBI:59789"/>
    </ligand>
</feature>
<organism>
    <name type="scientific">Candida glabrata (strain ATCC 2001 / BCRC 20586 / JCM 3761 / NBRC 0622 / NRRL Y-65 / CBS 138)</name>
    <name type="common">Yeast</name>
    <name type="synonym">Nakaseomyces glabratus</name>
    <dbReference type="NCBI Taxonomy" id="284593"/>
    <lineage>
        <taxon>Eukaryota</taxon>
        <taxon>Fungi</taxon>
        <taxon>Dikarya</taxon>
        <taxon>Ascomycota</taxon>
        <taxon>Saccharomycotina</taxon>
        <taxon>Saccharomycetes</taxon>
        <taxon>Saccharomycetales</taxon>
        <taxon>Saccharomycetaceae</taxon>
        <taxon>Nakaseomyces</taxon>
    </lineage>
</organism>
<dbReference type="EC" id="2.1.1.220"/>
<dbReference type="EMBL" id="CR380958">
    <property type="protein sequence ID" value="CAG61987.1"/>
    <property type="molecule type" value="Genomic_DNA"/>
</dbReference>
<dbReference type="RefSeq" id="XP_449017.1">
    <property type="nucleotide sequence ID" value="XM_449017.1"/>
</dbReference>
<dbReference type="SMR" id="Q6FL77"/>
<dbReference type="FunCoup" id="Q6FL77">
    <property type="interactions" value="661"/>
</dbReference>
<dbReference type="STRING" id="284593.Q6FL77"/>
<dbReference type="EnsemblFungi" id="CAGL0L05566g-T">
    <property type="protein sequence ID" value="CAGL0L05566g-T-p1"/>
    <property type="gene ID" value="CAGL0L05566g"/>
</dbReference>
<dbReference type="KEGG" id="cgr:2890796"/>
<dbReference type="CGD" id="CAL0135342">
    <property type="gene designation" value="CAGL0L05566g"/>
</dbReference>
<dbReference type="VEuPathDB" id="FungiDB:CAGL0L05566g"/>
<dbReference type="eggNOG" id="KOG2915">
    <property type="taxonomic scope" value="Eukaryota"/>
</dbReference>
<dbReference type="HOGENOM" id="CLU_025402_4_0_1"/>
<dbReference type="InParanoid" id="Q6FL77"/>
<dbReference type="OMA" id="RPDHRMI"/>
<dbReference type="Proteomes" id="UP000002428">
    <property type="component" value="Chromosome L"/>
</dbReference>
<dbReference type="GO" id="GO:0005634">
    <property type="term" value="C:nucleus"/>
    <property type="evidence" value="ECO:0007669"/>
    <property type="project" value="UniProtKB-SubCell"/>
</dbReference>
<dbReference type="GO" id="GO:0031515">
    <property type="term" value="C:tRNA (m1A) methyltransferase complex"/>
    <property type="evidence" value="ECO:0007669"/>
    <property type="project" value="EnsemblFungi"/>
</dbReference>
<dbReference type="GO" id="GO:0160107">
    <property type="term" value="F:tRNA (adenine(58)-N1)-methyltransferase activity"/>
    <property type="evidence" value="ECO:0007669"/>
    <property type="project" value="UniProtKB-EC"/>
</dbReference>
<dbReference type="GO" id="GO:0030488">
    <property type="term" value="P:tRNA methylation"/>
    <property type="evidence" value="ECO:0007669"/>
    <property type="project" value="EnsemblFungi"/>
</dbReference>
<dbReference type="CDD" id="cd02440">
    <property type="entry name" value="AdoMet_MTases"/>
    <property type="match status" value="1"/>
</dbReference>
<dbReference type="FunFam" id="3.10.330.20:FF:000002">
    <property type="entry name" value="tRNA (adenine(58)-N(1))-methyltransferase catalytic subunit TRMT61A"/>
    <property type="match status" value="1"/>
</dbReference>
<dbReference type="Gene3D" id="3.10.330.20">
    <property type="match status" value="1"/>
</dbReference>
<dbReference type="Gene3D" id="3.40.50.150">
    <property type="entry name" value="Vaccinia Virus protein VP39"/>
    <property type="match status" value="1"/>
</dbReference>
<dbReference type="InterPro" id="IPR029063">
    <property type="entry name" value="SAM-dependent_MTases_sf"/>
</dbReference>
<dbReference type="InterPro" id="IPR049470">
    <property type="entry name" value="TRM61_C"/>
</dbReference>
<dbReference type="InterPro" id="IPR014816">
    <property type="entry name" value="tRNA_MeTrfase_Gcd14"/>
</dbReference>
<dbReference type="PANTHER" id="PTHR12133">
    <property type="entry name" value="TRNA (ADENINE(58)-N(1))-METHYLTRANSFERASE"/>
    <property type="match status" value="1"/>
</dbReference>
<dbReference type="PANTHER" id="PTHR12133:SF2">
    <property type="entry name" value="TRNA (ADENINE(58)-N(1))-METHYLTRANSFERASE CATALYTIC SUBUNIT TRMT61A"/>
    <property type="match status" value="1"/>
</dbReference>
<dbReference type="Pfam" id="PF08704">
    <property type="entry name" value="GCD14"/>
    <property type="match status" value="1"/>
</dbReference>
<dbReference type="PIRSF" id="PIRSF017269">
    <property type="entry name" value="GCD14"/>
    <property type="match status" value="1"/>
</dbReference>
<dbReference type="SUPFAM" id="SSF53335">
    <property type="entry name" value="S-adenosyl-L-methionine-dependent methyltransferases"/>
    <property type="match status" value="1"/>
</dbReference>
<dbReference type="PROSITE" id="PS51620">
    <property type="entry name" value="SAM_TRM61"/>
    <property type="match status" value="1"/>
</dbReference>
<keyword id="KW-0489">Methyltransferase</keyword>
<keyword id="KW-0539">Nucleus</keyword>
<keyword id="KW-1185">Reference proteome</keyword>
<keyword id="KW-0949">S-adenosyl-L-methionine</keyword>
<keyword id="KW-0808">Transferase</keyword>
<keyword id="KW-0819">tRNA processing</keyword>
<comment type="function">
    <text evidence="1">Catalytic subunit of tRNA (adenine-N(1)-)-methyltransferase, which catalyzes the formation of N(1)-methyladenine at position 58 (m1A58) in initiator methionyl-tRNA.</text>
</comment>
<comment type="catalytic activity">
    <reaction evidence="3">
        <text>adenosine(58) in tRNA + S-adenosyl-L-methionine = N(1)-methyladenosine(58) in tRNA + S-adenosyl-L-homocysteine + H(+)</text>
        <dbReference type="Rhea" id="RHEA:43152"/>
        <dbReference type="Rhea" id="RHEA-COMP:10365"/>
        <dbReference type="Rhea" id="RHEA-COMP:10366"/>
        <dbReference type="ChEBI" id="CHEBI:15378"/>
        <dbReference type="ChEBI" id="CHEBI:57856"/>
        <dbReference type="ChEBI" id="CHEBI:59789"/>
        <dbReference type="ChEBI" id="CHEBI:74411"/>
        <dbReference type="ChEBI" id="CHEBI:74491"/>
        <dbReference type="EC" id="2.1.1.220"/>
    </reaction>
</comment>
<comment type="subunit">
    <text evidence="1">Heterotetramer; composed of two copies of TRM6 and two copies of TRM61.</text>
</comment>
<comment type="subcellular location">
    <subcellularLocation>
        <location evidence="1">Nucleus</location>
    </subcellularLocation>
</comment>
<comment type="similarity">
    <text evidence="3">Belongs to the class I-like SAM-binding methyltransferase superfamily. TRM61 family.</text>
</comment>
<name>TRM61_CANGA</name>
<proteinExistence type="inferred from homology"/>
<protein>
    <recommendedName>
        <fullName>tRNA (adenine(58)-N(1))-methyltransferase catalytic subunit TRM61</fullName>
        <ecNumber>2.1.1.220</ecNumber>
    </recommendedName>
    <alternativeName>
        <fullName>tRNA(m1A58)-methyltransferase subunit TRM61</fullName>
        <shortName>tRNA(m1A58)MTase subunit TRM61</shortName>
    </alternativeName>
</protein>
<evidence type="ECO:0000250" key="1">
    <source>
        <dbReference type="UniProtKB" id="P46959"/>
    </source>
</evidence>
<evidence type="ECO:0000250" key="2">
    <source>
        <dbReference type="UniProtKB" id="Q96FX7"/>
    </source>
</evidence>
<evidence type="ECO:0000255" key="3">
    <source>
        <dbReference type="PROSITE-ProRule" id="PRU00952"/>
    </source>
</evidence>
<sequence>MVEVFDKYKDLIQEGDLALIWISRDNIKPVTINANETFNTRYGSFPHKDMIGKPYGSQIAIRTKVAKKFAFVHVMQPSPELWTLSLPHRTQIVYTPDSSYIMQRLNCSPNSRVIEAGTGSGSFSHAFARSVGQLYSYEFHPVRYEQATEEFKEHGLLDKNTIITHRDVCKDGFTIKKTDETSYQFKADEEQLQIKADVIFLDLPAPWEAIPHIDSVIDNDEKVGLCCFSPCIEQVDKTLEVLEKHGWFNVEMVEIQGRQYESRRQMVRSLDDALERLSDIKKRKLAMVERRQKAEEELEKKIEANEKNLPELPPKSIEKSKFNPFGKGYRVKEGDANFQWKEVTKVESEIKSHTSYLTFAYKIKRNEDENLDKN</sequence>
<reference key="1">
    <citation type="journal article" date="2004" name="Nature">
        <title>Genome evolution in yeasts.</title>
        <authorList>
            <person name="Dujon B."/>
            <person name="Sherman D."/>
            <person name="Fischer G."/>
            <person name="Durrens P."/>
            <person name="Casaregola S."/>
            <person name="Lafontaine I."/>
            <person name="de Montigny J."/>
            <person name="Marck C."/>
            <person name="Neuveglise C."/>
            <person name="Talla E."/>
            <person name="Goffard N."/>
            <person name="Frangeul L."/>
            <person name="Aigle M."/>
            <person name="Anthouard V."/>
            <person name="Babour A."/>
            <person name="Barbe V."/>
            <person name="Barnay S."/>
            <person name="Blanchin S."/>
            <person name="Beckerich J.-M."/>
            <person name="Beyne E."/>
            <person name="Bleykasten C."/>
            <person name="Boisrame A."/>
            <person name="Boyer J."/>
            <person name="Cattolico L."/>
            <person name="Confanioleri F."/>
            <person name="de Daruvar A."/>
            <person name="Despons L."/>
            <person name="Fabre E."/>
            <person name="Fairhead C."/>
            <person name="Ferry-Dumazet H."/>
            <person name="Groppi A."/>
            <person name="Hantraye F."/>
            <person name="Hennequin C."/>
            <person name="Jauniaux N."/>
            <person name="Joyet P."/>
            <person name="Kachouri R."/>
            <person name="Kerrest A."/>
            <person name="Koszul R."/>
            <person name="Lemaire M."/>
            <person name="Lesur I."/>
            <person name="Ma L."/>
            <person name="Muller H."/>
            <person name="Nicaud J.-M."/>
            <person name="Nikolski M."/>
            <person name="Oztas S."/>
            <person name="Ozier-Kalogeropoulos O."/>
            <person name="Pellenz S."/>
            <person name="Potier S."/>
            <person name="Richard G.-F."/>
            <person name="Straub M.-L."/>
            <person name="Suleau A."/>
            <person name="Swennen D."/>
            <person name="Tekaia F."/>
            <person name="Wesolowski-Louvel M."/>
            <person name="Westhof E."/>
            <person name="Wirth B."/>
            <person name="Zeniou-Meyer M."/>
            <person name="Zivanovic Y."/>
            <person name="Bolotin-Fukuhara M."/>
            <person name="Thierry A."/>
            <person name="Bouchier C."/>
            <person name="Caudron B."/>
            <person name="Scarpelli C."/>
            <person name="Gaillardin C."/>
            <person name="Weissenbach J."/>
            <person name="Wincker P."/>
            <person name="Souciet J.-L."/>
        </authorList>
    </citation>
    <scope>NUCLEOTIDE SEQUENCE [LARGE SCALE GENOMIC DNA]</scope>
    <source>
        <strain>ATCC 2001 / BCRC 20586 / JCM 3761 / NBRC 0622 / NRRL Y-65 / CBS 138</strain>
    </source>
</reference>